<keyword id="KW-0997">Cell inner membrane</keyword>
<keyword id="KW-1003">Cell membrane</keyword>
<keyword id="KW-0143">Chaperone</keyword>
<keyword id="KW-0472">Membrane</keyword>
<keyword id="KW-0653">Protein transport</keyword>
<keyword id="KW-1185">Reference proteome</keyword>
<keyword id="KW-0812">Transmembrane</keyword>
<keyword id="KW-1133">Transmembrane helix</keyword>
<keyword id="KW-0813">Transport</keyword>
<evidence type="ECO:0000255" key="1">
    <source>
        <dbReference type="HAMAP-Rule" id="MF_01810"/>
    </source>
</evidence>
<sequence length="615" mass="68428">MQNDNKNTLMFIVSAFAILIGYQFFVLGPQQKKAEAEFRAKKAAEQQSAAKAGVTLDANGNPAPLRLSRDAAKALSPRIEVDTPALSGSIALKGARIDDLFLRKYDETTKKDSPPVELFRPEGAEHAWFADFGWAGANLPGLPDSRTVWTAAPGQVLRPNSPVTLTYDNGLGLTFTRVIAVDDQAMFTVTDSVKNNGTNGLQLAPYATVQRQGISDALGKNQIVHEGAIGVLGATDEQKLEMAKYGKWKKDKPLQSFDSVGGWTGITDKYWLAALIPGQNQAIKAQYRVTNVAGIDVYDVNFLGPVQVLNPGATVSQTTRLFAGAKTVPLLRKYEYGATPAPAIWEFWNKTKAEIPRFDDAVDWGMFRFFTRPIFNILEVFYKLVGNFGLAILLLTVVLKLVLYPMADKSYESMAKMKKIAPEVEKLKAKHKDDPAKQQQEMMALYQKEKINPMMGCLPMLIQIPVFYALYKVLTVTIEMRHAPFFGWIQDLSAPDPTTMFNLFGLIPWDPGSLPLIGAMIAHLGVWPLLYGFTMWLTTAMNPPAGDPIQQKIFQWFPVIFTFTLSGFAVGLVIYWCWSNVLTIFQQYIIMRRYKVENPIDQIIARLRGKTAGAT</sequence>
<gene>
    <name evidence="1" type="primary">yidC</name>
    <name type="ordered locus">CCNA_00806</name>
</gene>
<reference key="1">
    <citation type="journal article" date="2010" name="J. Bacteriol.">
        <title>The genetic basis of laboratory adaptation in Caulobacter crescentus.</title>
        <authorList>
            <person name="Marks M.E."/>
            <person name="Castro-Rojas C.M."/>
            <person name="Teiling C."/>
            <person name="Du L."/>
            <person name="Kapatral V."/>
            <person name="Walunas T.L."/>
            <person name="Crosson S."/>
        </authorList>
    </citation>
    <scope>NUCLEOTIDE SEQUENCE [LARGE SCALE GENOMIC DNA]</scope>
    <source>
        <strain>NA1000 / CB15N</strain>
    </source>
</reference>
<organism>
    <name type="scientific">Caulobacter vibrioides (strain NA1000 / CB15N)</name>
    <name type="common">Caulobacter crescentus</name>
    <dbReference type="NCBI Taxonomy" id="565050"/>
    <lineage>
        <taxon>Bacteria</taxon>
        <taxon>Pseudomonadati</taxon>
        <taxon>Pseudomonadota</taxon>
        <taxon>Alphaproteobacteria</taxon>
        <taxon>Caulobacterales</taxon>
        <taxon>Caulobacteraceae</taxon>
        <taxon>Caulobacter</taxon>
    </lineage>
</organism>
<dbReference type="EMBL" id="CP001340">
    <property type="protein sequence ID" value="ACL94271.1"/>
    <property type="molecule type" value="Genomic_DNA"/>
</dbReference>
<dbReference type="RefSeq" id="WP_010918653.1">
    <property type="nucleotide sequence ID" value="NC_011916.1"/>
</dbReference>
<dbReference type="RefSeq" id="YP_002516179.1">
    <property type="nucleotide sequence ID" value="NC_011916.1"/>
</dbReference>
<dbReference type="SMR" id="B8H1E8"/>
<dbReference type="GeneID" id="7329842"/>
<dbReference type="KEGG" id="ccs:CCNA_00806"/>
<dbReference type="PATRIC" id="fig|565050.3.peg.795"/>
<dbReference type="HOGENOM" id="CLU_016535_1_0_5"/>
<dbReference type="OrthoDB" id="9780552at2"/>
<dbReference type="PhylomeDB" id="B8H1E8"/>
<dbReference type="Proteomes" id="UP000001364">
    <property type="component" value="Chromosome"/>
</dbReference>
<dbReference type="GO" id="GO:0005886">
    <property type="term" value="C:plasma membrane"/>
    <property type="evidence" value="ECO:0007669"/>
    <property type="project" value="UniProtKB-SubCell"/>
</dbReference>
<dbReference type="GO" id="GO:0032977">
    <property type="term" value="F:membrane insertase activity"/>
    <property type="evidence" value="ECO:0007669"/>
    <property type="project" value="InterPro"/>
</dbReference>
<dbReference type="GO" id="GO:0051205">
    <property type="term" value="P:protein insertion into membrane"/>
    <property type="evidence" value="ECO:0007669"/>
    <property type="project" value="TreeGrafter"/>
</dbReference>
<dbReference type="GO" id="GO:0015031">
    <property type="term" value="P:protein transport"/>
    <property type="evidence" value="ECO:0007669"/>
    <property type="project" value="UniProtKB-KW"/>
</dbReference>
<dbReference type="CDD" id="cd20070">
    <property type="entry name" value="5TM_YidC_Alb3"/>
    <property type="match status" value="1"/>
</dbReference>
<dbReference type="CDD" id="cd19961">
    <property type="entry name" value="EcYidC-like_peri"/>
    <property type="match status" value="1"/>
</dbReference>
<dbReference type="Gene3D" id="2.70.98.90">
    <property type="match status" value="1"/>
</dbReference>
<dbReference type="HAMAP" id="MF_01810">
    <property type="entry name" value="YidC_type1"/>
    <property type="match status" value="1"/>
</dbReference>
<dbReference type="InterPro" id="IPR019998">
    <property type="entry name" value="Membr_insert_YidC"/>
</dbReference>
<dbReference type="InterPro" id="IPR028053">
    <property type="entry name" value="Membr_insert_YidC_N"/>
</dbReference>
<dbReference type="InterPro" id="IPR001708">
    <property type="entry name" value="YidC/ALB3/OXA1/COX18"/>
</dbReference>
<dbReference type="InterPro" id="IPR028055">
    <property type="entry name" value="YidC/Oxa/ALB_C"/>
</dbReference>
<dbReference type="InterPro" id="IPR047196">
    <property type="entry name" value="YidC_ALB_C"/>
</dbReference>
<dbReference type="InterPro" id="IPR038221">
    <property type="entry name" value="YidC_periplasmic_sf"/>
</dbReference>
<dbReference type="NCBIfam" id="NF002353">
    <property type="entry name" value="PRK01318.1-4"/>
    <property type="match status" value="1"/>
</dbReference>
<dbReference type="NCBIfam" id="TIGR03593">
    <property type="entry name" value="yidC_nterm"/>
    <property type="match status" value="1"/>
</dbReference>
<dbReference type="NCBIfam" id="TIGR03592">
    <property type="entry name" value="yidC_oxa1_cterm"/>
    <property type="match status" value="1"/>
</dbReference>
<dbReference type="PANTHER" id="PTHR12428:SF65">
    <property type="entry name" value="CYTOCHROME C OXIDASE ASSEMBLY PROTEIN COX18, MITOCHONDRIAL"/>
    <property type="match status" value="1"/>
</dbReference>
<dbReference type="PANTHER" id="PTHR12428">
    <property type="entry name" value="OXA1"/>
    <property type="match status" value="1"/>
</dbReference>
<dbReference type="Pfam" id="PF02096">
    <property type="entry name" value="60KD_IMP"/>
    <property type="match status" value="1"/>
</dbReference>
<dbReference type="Pfam" id="PF14849">
    <property type="entry name" value="YidC_periplas"/>
    <property type="match status" value="1"/>
</dbReference>
<dbReference type="PRINTS" id="PR00701">
    <property type="entry name" value="60KDINNERMP"/>
</dbReference>
<dbReference type="PRINTS" id="PR01900">
    <property type="entry name" value="YIDCPROTEIN"/>
</dbReference>
<protein>
    <recommendedName>
        <fullName evidence="1">Membrane protein insertase YidC</fullName>
    </recommendedName>
    <alternativeName>
        <fullName evidence="1">Foldase YidC</fullName>
    </alternativeName>
    <alternativeName>
        <fullName evidence="1">Membrane integrase YidC</fullName>
    </alternativeName>
    <alternativeName>
        <fullName evidence="1">Membrane protein YidC</fullName>
    </alternativeName>
</protein>
<proteinExistence type="inferred from homology"/>
<feature type="chain" id="PRO_1000187645" description="Membrane protein insertase YidC">
    <location>
        <begin position="1"/>
        <end position="615"/>
    </location>
</feature>
<feature type="transmembrane region" description="Helical" evidence="1">
    <location>
        <begin position="9"/>
        <end position="29"/>
    </location>
</feature>
<feature type="transmembrane region" description="Helical" evidence="1">
    <location>
        <begin position="384"/>
        <end position="404"/>
    </location>
</feature>
<feature type="transmembrane region" description="Helical" evidence="1">
    <location>
        <begin position="458"/>
        <end position="478"/>
    </location>
</feature>
<feature type="transmembrane region" description="Helical" evidence="1">
    <location>
        <begin position="516"/>
        <end position="536"/>
    </location>
</feature>
<feature type="transmembrane region" description="Helical" evidence="1">
    <location>
        <begin position="556"/>
        <end position="576"/>
    </location>
</feature>
<comment type="function">
    <text evidence="1">Required for the insertion and/or proper folding and/or complex formation of integral membrane proteins into the membrane. Involved in integration of membrane proteins that insert both dependently and independently of the Sec translocase complex, as well as at least some lipoproteins. Aids folding of multispanning membrane proteins.</text>
</comment>
<comment type="subunit">
    <text evidence="1">Interacts with the Sec translocase complex via SecD. Specifically interacts with transmembrane segments of nascent integral membrane proteins during membrane integration.</text>
</comment>
<comment type="subcellular location">
    <subcellularLocation>
        <location evidence="1">Cell inner membrane</location>
        <topology evidence="1">Multi-pass membrane protein</topology>
    </subcellularLocation>
</comment>
<comment type="similarity">
    <text evidence="1">Belongs to the OXA1/ALB3/YidC family. Type 1 subfamily.</text>
</comment>
<accession>B8H1E8</accession>
<name>YIDC_CAUVN</name>